<sequence>MKFIIKLFPEITIKSQSVRLRFIKILTGNIRNVLKHYDETLAVVRHWDNIEVRAKDENQRLAIRDALTRIPGIHHILEVEDVPFTDMHDIFEKALAQYREQLEGKTFCVRVKRRGKHEFSSIEVERYVGGGLNQHIESARVKLTNPDVTVHLEVEDDRLLLIKGRYEGIGGFPIGTQEDVLSLISGGFDSSVSSYMLMRRGCRVHYCFFNLGGAAHEIGVRQVAHYLWNRFGSSHRVRFVAINFEPVVGEILEKVDDGQMGVVLKRMMVRAASKVAERYGVQALVTGEALGQVSSQTLTNLRLIDNVSDTLILRPLISYDKEHIINLARQIGTEDFARTMPEYCGVISKSPTVKAIKAKIEAEEENFDFSILDKVVEEANNVDIREIAQQTQQEVVEVETVSGFGANDVILDIRSVDEQDDKPLKVEGVDVVSLPFYKLSTKFGDLDQSKTWLLWCERGVMSRLQALYLREQGFANVKVYRP</sequence>
<reference key="1">
    <citation type="journal article" date="2001" name="Nature">
        <title>Complete genome sequence of a multiple drug resistant Salmonella enterica serovar Typhi CT18.</title>
        <authorList>
            <person name="Parkhill J."/>
            <person name="Dougan G."/>
            <person name="James K.D."/>
            <person name="Thomson N.R."/>
            <person name="Pickard D."/>
            <person name="Wain J."/>
            <person name="Churcher C.M."/>
            <person name="Mungall K.L."/>
            <person name="Bentley S.D."/>
            <person name="Holden M.T.G."/>
            <person name="Sebaihia M."/>
            <person name="Baker S."/>
            <person name="Basham D."/>
            <person name="Brooks K."/>
            <person name="Chillingworth T."/>
            <person name="Connerton P."/>
            <person name="Cronin A."/>
            <person name="Davis P."/>
            <person name="Davies R.M."/>
            <person name="Dowd L."/>
            <person name="White N."/>
            <person name="Farrar J."/>
            <person name="Feltwell T."/>
            <person name="Hamlin N."/>
            <person name="Haque A."/>
            <person name="Hien T.T."/>
            <person name="Holroyd S."/>
            <person name="Jagels K."/>
            <person name="Krogh A."/>
            <person name="Larsen T.S."/>
            <person name="Leather S."/>
            <person name="Moule S."/>
            <person name="O'Gaora P."/>
            <person name="Parry C."/>
            <person name="Quail M.A."/>
            <person name="Rutherford K.M."/>
            <person name="Simmonds M."/>
            <person name="Skelton J."/>
            <person name="Stevens K."/>
            <person name="Whitehead S."/>
            <person name="Barrell B.G."/>
        </authorList>
    </citation>
    <scope>NUCLEOTIDE SEQUENCE [LARGE SCALE GENOMIC DNA]</scope>
    <source>
        <strain>CT18</strain>
    </source>
</reference>
<reference key="2">
    <citation type="journal article" date="2003" name="J. Bacteriol.">
        <title>Comparative genomics of Salmonella enterica serovar Typhi strains Ty2 and CT18.</title>
        <authorList>
            <person name="Deng W."/>
            <person name="Liou S.-R."/>
            <person name="Plunkett G. III"/>
            <person name="Mayhew G.F."/>
            <person name="Rose D.J."/>
            <person name="Burland V."/>
            <person name="Kodoyianni V."/>
            <person name="Schwartz D.C."/>
            <person name="Blattner F.R."/>
        </authorList>
    </citation>
    <scope>NUCLEOTIDE SEQUENCE [LARGE SCALE GENOMIC DNA]</scope>
    <source>
        <strain>ATCC 700931 / Ty2</strain>
    </source>
</reference>
<accession>Q8Z8X1</accession>
<gene>
    <name evidence="1" type="primary">thiI</name>
    <name type="ordered locus">STY0464</name>
    <name type="ordered locus">t2438</name>
</gene>
<feature type="chain" id="PRO_0000154859" description="tRNA sulfurtransferase">
    <location>
        <begin position="1"/>
        <end position="482"/>
    </location>
</feature>
<feature type="domain" description="THUMP" evidence="1">
    <location>
        <begin position="61"/>
        <end position="165"/>
    </location>
</feature>
<feature type="domain" description="Rhodanese" evidence="1">
    <location>
        <begin position="404"/>
        <end position="482"/>
    </location>
</feature>
<feature type="active site" description="Cysteine persulfide intermediate" evidence="1">
    <location>
        <position position="456"/>
    </location>
</feature>
<feature type="binding site" evidence="1">
    <location>
        <begin position="183"/>
        <end position="184"/>
    </location>
    <ligand>
        <name>ATP</name>
        <dbReference type="ChEBI" id="CHEBI:30616"/>
    </ligand>
</feature>
<feature type="binding site" evidence="1">
    <location>
        <position position="265"/>
    </location>
    <ligand>
        <name>ATP</name>
        <dbReference type="ChEBI" id="CHEBI:30616"/>
    </ligand>
</feature>
<feature type="binding site" evidence="1">
    <location>
        <position position="287"/>
    </location>
    <ligand>
        <name>ATP</name>
        <dbReference type="ChEBI" id="CHEBI:30616"/>
    </ligand>
</feature>
<feature type="binding site" evidence="1">
    <location>
        <position position="296"/>
    </location>
    <ligand>
        <name>ATP</name>
        <dbReference type="ChEBI" id="CHEBI:30616"/>
    </ligand>
</feature>
<feature type="disulfide bond" description="Redox-active" evidence="1">
    <location>
        <begin position="344"/>
        <end position="456"/>
    </location>
</feature>
<keyword id="KW-0067">ATP-binding</keyword>
<keyword id="KW-0963">Cytoplasm</keyword>
<keyword id="KW-1015">Disulfide bond</keyword>
<keyword id="KW-0547">Nucleotide-binding</keyword>
<keyword id="KW-0676">Redox-active center</keyword>
<keyword id="KW-0694">RNA-binding</keyword>
<keyword id="KW-0784">Thiamine biosynthesis</keyword>
<keyword id="KW-0808">Transferase</keyword>
<keyword id="KW-0820">tRNA-binding</keyword>
<evidence type="ECO:0000255" key="1">
    <source>
        <dbReference type="HAMAP-Rule" id="MF_00021"/>
    </source>
</evidence>
<comment type="function">
    <text evidence="1">Catalyzes the ATP-dependent transfer of a sulfur to tRNA to produce 4-thiouridine in position 8 of tRNAs, which functions as a near-UV photosensor. Also catalyzes the transfer of sulfur to the sulfur carrier protein ThiS, forming ThiS-thiocarboxylate. This is a step in the synthesis of thiazole, in the thiamine biosynthesis pathway. The sulfur is donated as persulfide by IscS.</text>
</comment>
<comment type="catalytic activity">
    <reaction evidence="1">
        <text>[ThiI sulfur-carrier protein]-S-sulfanyl-L-cysteine + a uridine in tRNA + 2 reduced [2Fe-2S]-[ferredoxin] + ATP + H(+) = [ThiI sulfur-carrier protein]-L-cysteine + a 4-thiouridine in tRNA + 2 oxidized [2Fe-2S]-[ferredoxin] + AMP + diphosphate</text>
        <dbReference type="Rhea" id="RHEA:24176"/>
        <dbReference type="Rhea" id="RHEA-COMP:10000"/>
        <dbReference type="Rhea" id="RHEA-COMP:10001"/>
        <dbReference type="Rhea" id="RHEA-COMP:13337"/>
        <dbReference type="Rhea" id="RHEA-COMP:13338"/>
        <dbReference type="Rhea" id="RHEA-COMP:13339"/>
        <dbReference type="Rhea" id="RHEA-COMP:13340"/>
        <dbReference type="ChEBI" id="CHEBI:15378"/>
        <dbReference type="ChEBI" id="CHEBI:29950"/>
        <dbReference type="ChEBI" id="CHEBI:30616"/>
        <dbReference type="ChEBI" id="CHEBI:33019"/>
        <dbReference type="ChEBI" id="CHEBI:33737"/>
        <dbReference type="ChEBI" id="CHEBI:33738"/>
        <dbReference type="ChEBI" id="CHEBI:61963"/>
        <dbReference type="ChEBI" id="CHEBI:65315"/>
        <dbReference type="ChEBI" id="CHEBI:136798"/>
        <dbReference type="ChEBI" id="CHEBI:456215"/>
        <dbReference type="EC" id="2.8.1.4"/>
    </reaction>
</comment>
<comment type="catalytic activity">
    <reaction evidence="1">
        <text>[ThiS sulfur-carrier protein]-C-terminal Gly-Gly-AMP + S-sulfanyl-L-cysteinyl-[cysteine desulfurase] + AH2 = [ThiS sulfur-carrier protein]-C-terminal-Gly-aminoethanethioate + L-cysteinyl-[cysteine desulfurase] + A + AMP + 2 H(+)</text>
        <dbReference type="Rhea" id="RHEA:43340"/>
        <dbReference type="Rhea" id="RHEA-COMP:12157"/>
        <dbReference type="Rhea" id="RHEA-COMP:12158"/>
        <dbReference type="Rhea" id="RHEA-COMP:12910"/>
        <dbReference type="Rhea" id="RHEA-COMP:19908"/>
        <dbReference type="ChEBI" id="CHEBI:13193"/>
        <dbReference type="ChEBI" id="CHEBI:15378"/>
        <dbReference type="ChEBI" id="CHEBI:17499"/>
        <dbReference type="ChEBI" id="CHEBI:29950"/>
        <dbReference type="ChEBI" id="CHEBI:61963"/>
        <dbReference type="ChEBI" id="CHEBI:90618"/>
        <dbReference type="ChEBI" id="CHEBI:232372"/>
        <dbReference type="ChEBI" id="CHEBI:456215"/>
    </reaction>
</comment>
<comment type="pathway">
    <text evidence="1">Cofactor biosynthesis; thiamine diphosphate biosynthesis.</text>
</comment>
<comment type="subcellular location">
    <subcellularLocation>
        <location evidence="1">Cytoplasm</location>
    </subcellularLocation>
</comment>
<comment type="similarity">
    <text evidence="1">Belongs to the ThiI family.</text>
</comment>
<name>THII_SALTI</name>
<dbReference type="EC" id="2.8.1.4" evidence="1"/>
<dbReference type="EMBL" id="AL513382">
    <property type="protein sequence ID" value="CAD08881.1"/>
    <property type="molecule type" value="Genomic_DNA"/>
</dbReference>
<dbReference type="EMBL" id="AE014613">
    <property type="protein sequence ID" value="AAO70028.1"/>
    <property type="molecule type" value="Genomic_DNA"/>
</dbReference>
<dbReference type="RefSeq" id="NP_455019.1">
    <property type="nucleotide sequence ID" value="NC_003198.1"/>
</dbReference>
<dbReference type="RefSeq" id="WP_000668658.1">
    <property type="nucleotide sequence ID" value="NZ_WSUR01000026.1"/>
</dbReference>
<dbReference type="SMR" id="Q8Z8X1"/>
<dbReference type="STRING" id="220341.gene:17584486"/>
<dbReference type="KEGG" id="stt:t2438"/>
<dbReference type="KEGG" id="sty:STY0464"/>
<dbReference type="PATRIC" id="fig|220341.7.peg.465"/>
<dbReference type="eggNOG" id="COG0301">
    <property type="taxonomic scope" value="Bacteria"/>
</dbReference>
<dbReference type="eggNOG" id="COG0607">
    <property type="taxonomic scope" value="Bacteria"/>
</dbReference>
<dbReference type="HOGENOM" id="CLU_037952_4_1_6"/>
<dbReference type="OMA" id="SMPEFCG"/>
<dbReference type="OrthoDB" id="9773948at2"/>
<dbReference type="UniPathway" id="UPA00060"/>
<dbReference type="Proteomes" id="UP000000541">
    <property type="component" value="Chromosome"/>
</dbReference>
<dbReference type="Proteomes" id="UP000002670">
    <property type="component" value="Chromosome"/>
</dbReference>
<dbReference type="GO" id="GO:0005829">
    <property type="term" value="C:cytosol"/>
    <property type="evidence" value="ECO:0007669"/>
    <property type="project" value="TreeGrafter"/>
</dbReference>
<dbReference type="GO" id="GO:0005524">
    <property type="term" value="F:ATP binding"/>
    <property type="evidence" value="ECO:0007669"/>
    <property type="project" value="UniProtKB-UniRule"/>
</dbReference>
<dbReference type="GO" id="GO:0004810">
    <property type="term" value="F:CCA tRNA nucleotidyltransferase activity"/>
    <property type="evidence" value="ECO:0007669"/>
    <property type="project" value="InterPro"/>
</dbReference>
<dbReference type="GO" id="GO:0000049">
    <property type="term" value="F:tRNA binding"/>
    <property type="evidence" value="ECO:0007669"/>
    <property type="project" value="UniProtKB-UniRule"/>
</dbReference>
<dbReference type="GO" id="GO:0140741">
    <property type="term" value="F:tRNA-uracil-4 sulfurtransferase activity"/>
    <property type="evidence" value="ECO:0007669"/>
    <property type="project" value="UniProtKB-EC"/>
</dbReference>
<dbReference type="GO" id="GO:0009228">
    <property type="term" value="P:thiamine biosynthetic process"/>
    <property type="evidence" value="ECO:0007669"/>
    <property type="project" value="UniProtKB-KW"/>
</dbReference>
<dbReference type="GO" id="GO:0009229">
    <property type="term" value="P:thiamine diphosphate biosynthetic process"/>
    <property type="evidence" value="ECO:0007669"/>
    <property type="project" value="UniProtKB-UniRule"/>
</dbReference>
<dbReference type="GO" id="GO:0052837">
    <property type="term" value="P:thiazole biosynthetic process"/>
    <property type="evidence" value="ECO:0007669"/>
    <property type="project" value="InterPro"/>
</dbReference>
<dbReference type="GO" id="GO:0002937">
    <property type="term" value="P:tRNA 4-thiouridine biosynthesis"/>
    <property type="evidence" value="ECO:0007669"/>
    <property type="project" value="TreeGrafter"/>
</dbReference>
<dbReference type="CDD" id="cd01712">
    <property type="entry name" value="PPase_ThiI"/>
    <property type="match status" value="1"/>
</dbReference>
<dbReference type="CDD" id="cd00158">
    <property type="entry name" value="RHOD"/>
    <property type="match status" value="1"/>
</dbReference>
<dbReference type="CDD" id="cd11716">
    <property type="entry name" value="THUMP_ThiI"/>
    <property type="match status" value="1"/>
</dbReference>
<dbReference type="FunFam" id="3.30.2130.30:FF:000002">
    <property type="entry name" value="tRNA sulfurtransferase"/>
    <property type="match status" value="1"/>
</dbReference>
<dbReference type="FunFam" id="3.40.250.10:FF:000003">
    <property type="entry name" value="tRNA sulfurtransferase"/>
    <property type="match status" value="1"/>
</dbReference>
<dbReference type="FunFam" id="3.40.50.620:FF:000029">
    <property type="entry name" value="tRNA sulfurtransferase"/>
    <property type="match status" value="1"/>
</dbReference>
<dbReference type="Gene3D" id="3.30.2130.30">
    <property type="match status" value="1"/>
</dbReference>
<dbReference type="Gene3D" id="3.40.50.620">
    <property type="entry name" value="HUPs"/>
    <property type="match status" value="1"/>
</dbReference>
<dbReference type="Gene3D" id="3.40.250.10">
    <property type="entry name" value="Rhodanese-like domain"/>
    <property type="match status" value="1"/>
</dbReference>
<dbReference type="HAMAP" id="MF_00021">
    <property type="entry name" value="ThiI"/>
    <property type="match status" value="1"/>
</dbReference>
<dbReference type="InterPro" id="IPR001763">
    <property type="entry name" value="Rhodanese-like_dom"/>
</dbReference>
<dbReference type="InterPro" id="IPR036873">
    <property type="entry name" value="Rhodanese-like_dom_sf"/>
</dbReference>
<dbReference type="InterPro" id="IPR014729">
    <property type="entry name" value="Rossmann-like_a/b/a_fold"/>
</dbReference>
<dbReference type="InterPro" id="IPR020536">
    <property type="entry name" value="ThiI_AANH"/>
</dbReference>
<dbReference type="InterPro" id="IPR054173">
    <property type="entry name" value="ThiI_fer"/>
</dbReference>
<dbReference type="InterPro" id="IPR049961">
    <property type="entry name" value="ThiI_N"/>
</dbReference>
<dbReference type="InterPro" id="IPR026340">
    <property type="entry name" value="THII_Thiazole_biosynth_dom"/>
</dbReference>
<dbReference type="InterPro" id="IPR004114">
    <property type="entry name" value="THUMP_dom"/>
</dbReference>
<dbReference type="InterPro" id="IPR049962">
    <property type="entry name" value="THUMP_ThiI"/>
</dbReference>
<dbReference type="InterPro" id="IPR003720">
    <property type="entry name" value="tRNA_STrfase"/>
</dbReference>
<dbReference type="InterPro" id="IPR050102">
    <property type="entry name" value="tRNA_sulfurtransferase_ThiI"/>
</dbReference>
<dbReference type="NCBIfam" id="TIGR04271">
    <property type="entry name" value="ThiI_C_thiazole"/>
    <property type="match status" value="1"/>
</dbReference>
<dbReference type="NCBIfam" id="TIGR00342">
    <property type="entry name" value="tRNA uracil 4-sulfurtransferase ThiI"/>
    <property type="match status" value="1"/>
</dbReference>
<dbReference type="PANTHER" id="PTHR43209">
    <property type="entry name" value="TRNA SULFURTRANSFERASE"/>
    <property type="match status" value="1"/>
</dbReference>
<dbReference type="PANTHER" id="PTHR43209:SF1">
    <property type="entry name" value="TRNA SULFURTRANSFERASE"/>
    <property type="match status" value="1"/>
</dbReference>
<dbReference type="Pfam" id="PF02568">
    <property type="entry name" value="ThiI"/>
    <property type="match status" value="1"/>
</dbReference>
<dbReference type="Pfam" id="PF22025">
    <property type="entry name" value="ThiI_fer"/>
    <property type="match status" value="1"/>
</dbReference>
<dbReference type="Pfam" id="PF02926">
    <property type="entry name" value="THUMP"/>
    <property type="match status" value="1"/>
</dbReference>
<dbReference type="SMART" id="SM00981">
    <property type="entry name" value="THUMP"/>
    <property type="match status" value="1"/>
</dbReference>
<dbReference type="SUPFAM" id="SSF52402">
    <property type="entry name" value="Adenine nucleotide alpha hydrolases-like"/>
    <property type="match status" value="1"/>
</dbReference>
<dbReference type="SUPFAM" id="SSF52821">
    <property type="entry name" value="Rhodanese/Cell cycle control phosphatase"/>
    <property type="match status" value="1"/>
</dbReference>
<dbReference type="SUPFAM" id="SSF143437">
    <property type="entry name" value="THUMP domain-like"/>
    <property type="match status" value="1"/>
</dbReference>
<dbReference type="PROSITE" id="PS50206">
    <property type="entry name" value="RHODANESE_3"/>
    <property type="match status" value="1"/>
</dbReference>
<dbReference type="PROSITE" id="PS51165">
    <property type="entry name" value="THUMP"/>
    <property type="match status" value="1"/>
</dbReference>
<proteinExistence type="inferred from homology"/>
<protein>
    <recommendedName>
        <fullName evidence="1">tRNA sulfurtransferase</fullName>
        <ecNumber evidence="1">2.8.1.4</ecNumber>
    </recommendedName>
    <alternativeName>
        <fullName evidence="1">Sulfur carrier protein ThiS sulfurtransferase</fullName>
    </alternativeName>
    <alternativeName>
        <fullName evidence="1">Thiamine biosynthesis protein ThiI</fullName>
    </alternativeName>
    <alternativeName>
        <fullName evidence="1">tRNA 4-thiouridine synthase</fullName>
    </alternativeName>
</protein>
<organism>
    <name type="scientific">Salmonella typhi</name>
    <dbReference type="NCBI Taxonomy" id="90370"/>
    <lineage>
        <taxon>Bacteria</taxon>
        <taxon>Pseudomonadati</taxon>
        <taxon>Pseudomonadota</taxon>
        <taxon>Gammaproteobacteria</taxon>
        <taxon>Enterobacterales</taxon>
        <taxon>Enterobacteriaceae</taxon>
        <taxon>Salmonella</taxon>
    </lineage>
</organism>